<dbReference type="EMBL" id="DQ851108">
    <property type="protein sequence ID" value="ABG91424.1"/>
    <property type="molecule type" value="Genomic_DNA"/>
</dbReference>
<dbReference type="RefSeq" id="YP_778592.1">
    <property type="nucleotide sequence ID" value="NC_008408.1"/>
</dbReference>
<dbReference type="SMR" id="Q06J35"/>
<dbReference type="GeneID" id="4353009"/>
<dbReference type="GO" id="GO:0009507">
    <property type="term" value="C:chloroplast"/>
    <property type="evidence" value="ECO:0007669"/>
    <property type="project" value="UniProtKB-SubCell"/>
</dbReference>
<dbReference type="GO" id="GO:1990904">
    <property type="term" value="C:ribonucleoprotein complex"/>
    <property type="evidence" value="ECO:0007669"/>
    <property type="project" value="UniProtKB-KW"/>
</dbReference>
<dbReference type="GO" id="GO:0005840">
    <property type="term" value="C:ribosome"/>
    <property type="evidence" value="ECO:0007669"/>
    <property type="project" value="UniProtKB-KW"/>
</dbReference>
<dbReference type="GO" id="GO:0019843">
    <property type="term" value="F:rRNA binding"/>
    <property type="evidence" value="ECO:0007669"/>
    <property type="project" value="UniProtKB-UniRule"/>
</dbReference>
<dbReference type="GO" id="GO:0003735">
    <property type="term" value="F:structural constituent of ribosome"/>
    <property type="evidence" value="ECO:0007669"/>
    <property type="project" value="InterPro"/>
</dbReference>
<dbReference type="GO" id="GO:0000027">
    <property type="term" value="P:ribosomal large subunit assembly"/>
    <property type="evidence" value="ECO:0007669"/>
    <property type="project" value="UniProtKB-UniRule"/>
</dbReference>
<dbReference type="GO" id="GO:0006412">
    <property type="term" value="P:translation"/>
    <property type="evidence" value="ECO:0007669"/>
    <property type="project" value="InterPro"/>
</dbReference>
<dbReference type="CDD" id="cd07026">
    <property type="entry name" value="Ribosomal_L20"/>
    <property type="match status" value="1"/>
</dbReference>
<dbReference type="Gene3D" id="6.10.160.10">
    <property type="match status" value="1"/>
</dbReference>
<dbReference type="Gene3D" id="1.10.1900.20">
    <property type="entry name" value="Ribosomal protein L20"/>
    <property type="match status" value="1"/>
</dbReference>
<dbReference type="HAMAP" id="MF_00382">
    <property type="entry name" value="Ribosomal_bL20"/>
    <property type="match status" value="1"/>
</dbReference>
<dbReference type="InterPro" id="IPR005813">
    <property type="entry name" value="Ribosomal_bL20"/>
</dbReference>
<dbReference type="InterPro" id="IPR035566">
    <property type="entry name" value="Ribosomal_protein_bL20_C"/>
</dbReference>
<dbReference type="NCBIfam" id="TIGR01032">
    <property type="entry name" value="rplT_bact"/>
    <property type="match status" value="1"/>
</dbReference>
<dbReference type="PANTHER" id="PTHR10986">
    <property type="entry name" value="39S RIBOSOMAL PROTEIN L20"/>
    <property type="match status" value="1"/>
</dbReference>
<dbReference type="Pfam" id="PF00453">
    <property type="entry name" value="Ribosomal_L20"/>
    <property type="match status" value="1"/>
</dbReference>
<dbReference type="PRINTS" id="PR00062">
    <property type="entry name" value="RIBOSOMALL20"/>
</dbReference>
<dbReference type="SUPFAM" id="SSF74731">
    <property type="entry name" value="Ribosomal protein L20"/>
    <property type="match status" value="1"/>
</dbReference>
<keyword id="KW-0150">Chloroplast</keyword>
<keyword id="KW-0934">Plastid</keyword>
<keyword id="KW-0687">Ribonucleoprotein</keyword>
<keyword id="KW-0689">Ribosomal protein</keyword>
<keyword id="KW-0694">RNA-binding</keyword>
<keyword id="KW-0699">rRNA-binding</keyword>
<evidence type="ECO:0000250" key="1"/>
<evidence type="ECO:0000305" key="2"/>
<gene>
    <name type="primary">rpl20</name>
</gene>
<comment type="function">
    <text evidence="1">Binds directly to 23S ribosomal RNA and is necessary for the in vitro assembly process of the 50S ribosomal subunit. It is not involved in the protein synthesizing functions of that subunit (By similarity).</text>
</comment>
<comment type="subcellular location">
    <subcellularLocation>
        <location>Plastid</location>
        <location>Chloroplast</location>
    </subcellularLocation>
</comment>
<comment type="similarity">
    <text evidence="2">Belongs to the bacterial ribosomal protein bL20 family.</text>
</comment>
<organism>
    <name type="scientific">Bigelowiella natans</name>
    <name type="common">Pedinomonas minutissima</name>
    <name type="synonym">Chlorarachnion sp. (strain CCMP621)</name>
    <dbReference type="NCBI Taxonomy" id="227086"/>
    <lineage>
        <taxon>Eukaryota</taxon>
        <taxon>Sar</taxon>
        <taxon>Rhizaria</taxon>
        <taxon>Cercozoa</taxon>
        <taxon>Chlorarachniophyceae</taxon>
        <taxon>Bigelowiella</taxon>
    </lineage>
</organism>
<name>RK20_BIGNA</name>
<protein>
    <recommendedName>
        <fullName evidence="2">Large ribosomal subunit protein bL20c</fullName>
    </recommendedName>
    <alternativeName>
        <fullName>50S ribosomal protein L20, chloroplastic</fullName>
    </alternativeName>
</protein>
<sequence>MTRVKRGKITCRTRKKRMQSVKGFRGAWSTLSRPAMQGSLRALNYSYKHRRKNVKTFRRLSIVRFNALIRNSGLPFTYNRLIALINLYNCRLNRNVLSQLGIRDSNTFTKLMKFYYH</sequence>
<proteinExistence type="inferred from homology"/>
<geneLocation type="chloroplast"/>
<feature type="chain" id="PRO_0000310400" description="Large ribosomal subunit protein bL20c">
    <location>
        <begin position="1"/>
        <end position="117"/>
    </location>
</feature>
<reference key="1">
    <citation type="journal article" date="2007" name="Mol. Biol. Evol.">
        <title>The complete chloroplast genome of the chlorarachniophyte Bigelowiella natans: evidence for independent origins of chlorarachniophyte and euglenid secondary endosymbionts.</title>
        <authorList>
            <person name="Rogers M.B."/>
            <person name="Gilson P.R."/>
            <person name="Su V."/>
            <person name="McFadden G.I."/>
            <person name="Keeling P.J."/>
        </authorList>
    </citation>
    <scope>NUCLEOTIDE SEQUENCE [LARGE SCALE GENOMIC DNA]</scope>
</reference>
<accession>Q06J35</accession>